<evidence type="ECO:0000255" key="1">
    <source>
        <dbReference type="HAMAP-Rule" id="MF_01815"/>
    </source>
</evidence>
<dbReference type="EC" id="2.3.1.180" evidence="1"/>
<dbReference type="EMBL" id="BA000028">
    <property type="protein sequence ID" value="BAC13160.1"/>
    <property type="molecule type" value="Genomic_DNA"/>
</dbReference>
<dbReference type="RefSeq" id="WP_011065603.1">
    <property type="nucleotide sequence ID" value="NC_004193.1"/>
</dbReference>
<dbReference type="SMR" id="Q8ERU6"/>
<dbReference type="STRING" id="221109.gene:10733443"/>
<dbReference type="KEGG" id="oih:OB1204"/>
<dbReference type="eggNOG" id="COG0332">
    <property type="taxonomic scope" value="Bacteria"/>
</dbReference>
<dbReference type="HOGENOM" id="CLU_039592_3_1_9"/>
<dbReference type="OrthoDB" id="9815506at2"/>
<dbReference type="PhylomeDB" id="Q8ERU6"/>
<dbReference type="UniPathway" id="UPA00094"/>
<dbReference type="Proteomes" id="UP000000822">
    <property type="component" value="Chromosome"/>
</dbReference>
<dbReference type="GO" id="GO:0005737">
    <property type="term" value="C:cytoplasm"/>
    <property type="evidence" value="ECO:0007669"/>
    <property type="project" value="UniProtKB-SubCell"/>
</dbReference>
<dbReference type="GO" id="GO:0004315">
    <property type="term" value="F:3-oxoacyl-[acyl-carrier-protein] synthase activity"/>
    <property type="evidence" value="ECO:0007669"/>
    <property type="project" value="InterPro"/>
</dbReference>
<dbReference type="GO" id="GO:0033818">
    <property type="term" value="F:beta-ketoacyl-acyl-carrier-protein synthase III activity"/>
    <property type="evidence" value="ECO:0007669"/>
    <property type="project" value="UniProtKB-UniRule"/>
</dbReference>
<dbReference type="GO" id="GO:0006633">
    <property type="term" value="P:fatty acid biosynthetic process"/>
    <property type="evidence" value="ECO:0007669"/>
    <property type="project" value="UniProtKB-UniRule"/>
</dbReference>
<dbReference type="CDD" id="cd00830">
    <property type="entry name" value="KAS_III"/>
    <property type="match status" value="1"/>
</dbReference>
<dbReference type="FunFam" id="3.40.47.10:FF:000004">
    <property type="entry name" value="3-oxoacyl-[acyl-carrier-protein] synthase 3"/>
    <property type="match status" value="1"/>
</dbReference>
<dbReference type="Gene3D" id="3.40.47.10">
    <property type="match status" value="1"/>
</dbReference>
<dbReference type="HAMAP" id="MF_01815">
    <property type="entry name" value="FabH"/>
    <property type="match status" value="1"/>
</dbReference>
<dbReference type="InterPro" id="IPR013747">
    <property type="entry name" value="ACP_syn_III_C"/>
</dbReference>
<dbReference type="InterPro" id="IPR013751">
    <property type="entry name" value="ACP_syn_III_N"/>
</dbReference>
<dbReference type="InterPro" id="IPR004655">
    <property type="entry name" value="FabH"/>
</dbReference>
<dbReference type="InterPro" id="IPR016039">
    <property type="entry name" value="Thiolase-like"/>
</dbReference>
<dbReference type="NCBIfam" id="TIGR00747">
    <property type="entry name" value="fabH"/>
    <property type="match status" value="1"/>
</dbReference>
<dbReference type="NCBIfam" id="NF006829">
    <property type="entry name" value="PRK09352.1"/>
    <property type="match status" value="1"/>
</dbReference>
<dbReference type="PANTHER" id="PTHR43091">
    <property type="entry name" value="3-OXOACYL-[ACYL-CARRIER-PROTEIN] SYNTHASE"/>
    <property type="match status" value="1"/>
</dbReference>
<dbReference type="PANTHER" id="PTHR43091:SF1">
    <property type="entry name" value="BETA-KETOACYL-[ACYL-CARRIER-PROTEIN] SYNTHASE III, CHLOROPLASTIC"/>
    <property type="match status" value="1"/>
</dbReference>
<dbReference type="Pfam" id="PF08545">
    <property type="entry name" value="ACP_syn_III"/>
    <property type="match status" value="1"/>
</dbReference>
<dbReference type="Pfam" id="PF08541">
    <property type="entry name" value="ACP_syn_III_C"/>
    <property type="match status" value="1"/>
</dbReference>
<dbReference type="SUPFAM" id="SSF53901">
    <property type="entry name" value="Thiolase-like"/>
    <property type="match status" value="1"/>
</dbReference>
<protein>
    <recommendedName>
        <fullName evidence="1">Beta-ketoacyl-[acyl-carrier-protein] synthase III</fullName>
        <shortName evidence="1">Beta-ketoacyl-ACP synthase III</shortName>
        <shortName evidence="1">KAS III</shortName>
        <ecNumber evidence="1">2.3.1.180</ecNumber>
    </recommendedName>
    <alternativeName>
        <fullName evidence="1">3-oxoacyl-[acyl-carrier-protein] synthase 3</fullName>
    </alternativeName>
    <alternativeName>
        <fullName evidence="1">3-oxoacyl-[acyl-carrier-protein] synthase III</fullName>
    </alternativeName>
</protein>
<keyword id="KW-0012">Acyltransferase</keyword>
<keyword id="KW-0963">Cytoplasm</keyword>
<keyword id="KW-0275">Fatty acid biosynthesis</keyword>
<keyword id="KW-0276">Fatty acid metabolism</keyword>
<keyword id="KW-0444">Lipid biosynthesis</keyword>
<keyword id="KW-0443">Lipid metabolism</keyword>
<keyword id="KW-0511">Multifunctional enzyme</keyword>
<keyword id="KW-1185">Reference proteome</keyword>
<keyword id="KW-0808">Transferase</keyword>
<reference key="1">
    <citation type="journal article" date="2002" name="Nucleic Acids Res.">
        <title>Genome sequence of Oceanobacillus iheyensis isolated from the Iheya Ridge and its unexpected adaptive capabilities to extreme environments.</title>
        <authorList>
            <person name="Takami H."/>
            <person name="Takaki Y."/>
            <person name="Uchiyama I."/>
        </authorList>
    </citation>
    <scope>NUCLEOTIDE SEQUENCE [LARGE SCALE GENOMIC DNA]</scope>
    <source>
        <strain>DSM 14371 / CIP 107618 / JCM 11309 / KCTC 3954 / HTE831</strain>
    </source>
</reference>
<organism>
    <name type="scientific">Oceanobacillus iheyensis (strain DSM 14371 / CIP 107618 / JCM 11309 / KCTC 3954 / HTE831)</name>
    <dbReference type="NCBI Taxonomy" id="221109"/>
    <lineage>
        <taxon>Bacteria</taxon>
        <taxon>Bacillati</taxon>
        <taxon>Bacillota</taxon>
        <taxon>Bacilli</taxon>
        <taxon>Bacillales</taxon>
        <taxon>Bacillaceae</taxon>
        <taxon>Oceanobacillus</taxon>
    </lineage>
</organism>
<feature type="chain" id="PRO_0000110448" description="Beta-ketoacyl-[acyl-carrier-protein] synthase III">
    <location>
        <begin position="1"/>
        <end position="312"/>
    </location>
</feature>
<feature type="region of interest" description="ACP-binding" evidence="1">
    <location>
        <begin position="238"/>
        <end position="242"/>
    </location>
</feature>
<feature type="active site" evidence="1">
    <location>
        <position position="112"/>
    </location>
</feature>
<feature type="active site" evidence="1">
    <location>
        <position position="237"/>
    </location>
</feature>
<feature type="active site" evidence="1">
    <location>
        <position position="267"/>
    </location>
</feature>
<sequence length="312" mass="33471">MNIGILGTGHYLPTNVVTNNDLEKIVDTNDEWIRTRTGIRERRLATEEVDTSDMAFHAALGALEEANLAAEDIDLILVATVTPNTSFPSVACIIQDQLGAKNAAAMDVSAACAGFMYGLITAKQFIDTGAYKHVLVVGAEKLSKITDWSDRTTCVLFGDGAGAAVVGEVGEGKGILSFELGANGAGAKELYLNHDDHIIMNGREVYKFAVRQMPDSTVNVIEQLGLSRDDVDYLVPHQANIRIMEAARERLGISEDKMAKSIEKFGNNSSASIPMALSEAVKEGKIKDNDLIVLVGFGGGLTWGAVALRWGK</sequence>
<comment type="function">
    <text evidence="1">Catalyzes the condensation reaction of fatty acid synthesis by the addition to an acyl acceptor of two carbons from malonyl-ACP. Catalyzes the first condensation reaction which initiates fatty acid synthesis and may therefore play a role in governing the total rate of fatty acid production. Possesses both acetoacetyl-ACP synthase and acetyl transacylase activities. Its substrate specificity determines the biosynthesis of branched-chain and/or straight-chain of fatty acids.</text>
</comment>
<comment type="catalytic activity">
    <reaction evidence="1">
        <text>malonyl-[ACP] + acetyl-CoA + H(+) = 3-oxobutanoyl-[ACP] + CO2 + CoA</text>
        <dbReference type="Rhea" id="RHEA:12080"/>
        <dbReference type="Rhea" id="RHEA-COMP:9623"/>
        <dbReference type="Rhea" id="RHEA-COMP:9625"/>
        <dbReference type="ChEBI" id="CHEBI:15378"/>
        <dbReference type="ChEBI" id="CHEBI:16526"/>
        <dbReference type="ChEBI" id="CHEBI:57287"/>
        <dbReference type="ChEBI" id="CHEBI:57288"/>
        <dbReference type="ChEBI" id="CHEBI:78449"/>
        <dbReference type="ChEBI" id="CHEBI:78450"/>
        <dbReference type="EC" id="2.3.1.180"/>
    </reaction>
</comment>
<comment type="pathway">
    <text evidence="1">Lipid metabolism; fatty acid biosynthesis.</text>
</comment>
<comment type="subunit">
    <text evidence="1">Homodimer.</text>
</comment>
<comment type="subcellular location">
    <subcellularLocation>
        <location evidence="1">Cytoplasm</location>
    </subcellularLocation>
</comment>
<comment type="domain">
    <text evidence="1">The last Arg residue of the ACP-binding site is essential for the weak association between ACP/AcpP and FabH.</text>
</comment>
<comment type="similarity">
    <text evidence="1">Belongs to the thiolase-like superfamily. FabH family.</text>
</comment>
<proteinExistence type="inferred from homology"/>
<accession>Q8ERU6</accession>
<gene>
    <name evidence="1" type="primary">fabH</name>
    <name type="ordered locus">OB1204</name>
</gene>
<name>FABH_OCEIH</name>